<proteinExistence type="predicted"/>
<gene>
    <name type="primary">atoE</name>
    <name type="ordered locus">HI_0772</name>
</gene>
<dbReference type="EMBL" id="L42023">
    <property type="protein sequence ID" value="AAC22431.1"/>
    <property type="molecule type" value="Genomic_DNA"/>
</dbReference>
<dbReference type="PIR" id="F64013">
    <property type="entry name" value="F64013"/>
</dbReference>
<dbReference type="RefSeq" id="NP_438931.1">
    <property type="nucleotide sequence ID" value="NC_000907.1"/>
</dbReference>
<dbReference type="STRING" id="71421.HI_0772"/>
<dbReference type="EnsemblBacteria" id="AAC22431">
    <property type="protein sequence ID" value="AAC22431"/>
    <property type="gene ID" value="HI_0772"/>
</dbReference>
<dbReference type="KEGG" id="hin:HI_0772"/>
<dbReference type="PATRIC" id="fig|71421.8.peg.811"/>
<dbReference type="eggNOG" id="COG2031">
    <property type="taxonomic scope" value="Bacteria"/>
</dbReference>
<dbReference type="HOGENOM" id="CLU_037744_0_0_6"/>
<dbReference type="OrthoDB" id="9342495at2"/>
<dbReference type="PhylomeDB" id="P44051"/>
<dbReference type="BioCyc" id="HINF71421:G1GJ1-812-MONOMER"/>
<dbReference type="Proteomes" id="UP000000579">
    <property type="component" value="Chromosome"/>
</dbReference>
<dbReference type="GO" id="GO:0005886">
    <property type="term" value="C:plasma membrane"/>
    <property type="evidence" value="ECO:0000318"/>
    <property type="project" value="GO_Central"/>
</dbReference>
<dbReference type="InterPro" id="IPR006161">
    <property type="entry name" value="CHP00366"/>
</dbReference>
<dbReference type="InterPro" id="IPR006160">
    <property type="entry name" value="SCFA_transpt_AtoE"/>
</dbReference>
<dbReference type="NCBIfam" id="TIGR00366">
    <property type="entry name" value="TIGR00366 family protein"/>
    <property type="match status" value="1"/>
</dbReference>
<dbReference type="PANTHER" id="PTHR41983">
    <property type="entry name" value="SHORT-CHAIN FATTY ACID TRANSPORTER-RELATED"/>
    <property type="match status" value="1"/>
</dbReference>
<dbReference type="PANTHER" id="PTHR41983:SF2">
    <property type="entry name" value="SHORT-CHAIN FATTY ACID TRANSPORTER-RELATED"/>
    <property type="match status" value="1"/>
</dbReference>
<dbReference type="Pfam" id="PF02667">
    <property type="entry name" value="SCFA_trans"/>
    <property type="match status" value="1"/>
</dbReference>
<accession>P44051</accession>
<keyword id="KW-0997">Cell inner membrane</keyword>
<keyword id="KW-1003">Cell membrane</keyword>
<keyword id="KW-0472">Membrane</keyword>
<keyword id="KW-1185">Reference proteome</keyword>
<keyword id="KW-0812">Transmembrane</keyword>
<keyword id="KW-1133">Transmembrane helix</keyword>
<keyword id="KW-0813">Transport</keyword>
<sequence length="447" mass="48443">MISRVSRFMTTFVSKYLPDPLIFAVLLTFVTFICAWGLTDSTPVDLVNMWGNGFWNLLGFGMQMALIVVTGNALATSPQIRKFLSTIASIAKTPAQGVVLVTFMGSIACIINWGFGLVVGAMFAKEVARRIKGSDYALLIACAYIAFMTWGGGFSGSMPLLAATPGNPVAHLMMSESNPQGIIPAVSTLFSGYNIFITLSLVICLPFITYMMMPKNGETKSIDPKLIAPDPTFDKKLDKDATLAEKMEESRFLAYTIGALGYSYLGMYFYKNGFNLTINNVNLIFLITGIVLHGSPMAYMRAIINATRSTAGILVQFPFYAGVQLMMEHSGLGGLITEFFINVANKDSFPLLTFFSSAFINFAVPSGGGHWVIQGPFVIPAAQALGADLGKSTMAIAYGEQWMNMAQPFWALPALGIAGLGVRDIMGFCMTALIFTAPIFIIGLYFL</sequence>
<protein>
    <recommendedName>
        <fullName>Putative short-chain fatty acid transporter</fullName>
    </recommendedName>
</protein>
<name>ATOE_HAEIN</name>
<organism>
    <name type="scientific">Haemophilus influenzae (strain ATCC 51907 / DSM 11121 / KW20 / Rd)</name>
    <dbReference type="NCBI Taxonomy" id="71421"/>
    <lineage>
        <taxon>Bacteria</taxon>
        <taxon>Pseudomonadati</taxon>
        <taxon>Pseudomonadota</taxon>
        <taxon>Gammaproteobacteria</taxon>
        <taxon>Pasteurellales</taxon>
        <taxon>Pasteurellaceae</taxon>
        <taxon>Haemophilus</taxon>
    </lineage>
</organism>
<reference key="1">
    <citation type="journal article" date="1995" name="Science">
        <title>Whole-genome random sequencing and assembly of Haemophilus influenzae Rd.</title>
        <authorList>
            <person name="Fleischmann R.D."/>
            <person name="Adams M.D."/>
            <person name="White O."/>
            <person name="Clayton R.A."/>
            <person name="Kirkness E.F."/>
            <person name="Kerlavage A.R."/>
            <person name="Bult C.J."/>
            <person name="Tomb J.-F."/>
            <person name="Dougherty B.A."/>
            <person name="Merrick J.M."/>
            <person name="McKenney K."/>
            <person name="Sutton G.G."/>
            <person name="FitzHugh W."/>
            <person name="Fields C.A."/>
            <person name="Gocayne J.D."/>
            <person name="Scott J.D."/>
            <person name="Shirley R."/>
            <person name="Liu L.-I."/>
            <person name="Glodek A."/>
            <person name="Kelley J.M."/>
            <person name="Weidman J.F."/>
            <person name="Phillips C.A."/>
            <person name="Spriggs T."/>
            <person name="Hedblom E."/>
            <person name="Cotton M.D."/>
            <person name="Utterback T.R."/>
            <person name="Hanna M.C."/>
            <person name="Nguyen D.T."/>
            <person name="Saudek D.M."/>
            <person name="Brandon R.C."/>
            <person name="Fine L.D."/>
            <person name="Fritchman J.L."/>
            <person name="Fuhrmann J.L."/>
            <person name="Geoghagen N.S.M."/>
            <person name="Gnehm C.L."/>
            <person name="McDonald L.A."/>
            <person name="Small K.V."/>
            <person name="Fraser C.M."/>
            <person name="Smith H.O."/>
            <person name="Venter J.C."/>
        </authorList>
    </citation>
    <scope>NUCLEOTIDE SEQUENCE [LARGE SCALE GENOMIC DNA]</scope>
    <source>
        <strain>ATCC 51907 / DSM 11121 / KW20 / Rd</strain>
    </source>
</reference>
<evidence type="ECO:0000255" key="1"/>
<evidence type="ECO:0000305" key="2"/>
<feature type="chain" id="PRO_0000064734" description="Putative short-chain fatty acid transporter">
    <location>
        <begin position="1"/>
        <end position="447"/>
    </location>
</feature>
<feature type="transmembrane region" description="Helical" evidence="1">
    <location>
        <begin position="17"/>
        <end position="37"/>
    </location>
</feature>
<feature type="transmembrane region" description="Helical" evidence="1">
    <location>
        <begin position="49"/>
        <end position="69"/>
    </location>
</feature>
<feature type="transmembrane region" description="Helical" evidence="1">
    <location>
        <begin position="98"/>
        <end position="118"/>
    </location>
</feature>
<feature type="transmembrane region" description="Helical" evidence="1">
    <location>
        <begin position="136"/>
        <end position="156"/>
    </location>
</feature>
<feature type="transmembrane region" description="Helical" evidence="1">
    <location>
        <begin position="188"/>
        <end position="208"/>
    </location>
</feature>
<feature type="transmembrane region" description="Helical" evidence="1">
    <location>
        <begin position="252"/>
        <end position="272"/>
    </location>
</feature>
<feature type="transmembrane region" description="Helical" evidence="1">
    <location>
        <begin position="284"/>
        <end position="304"/>
    </location>
</feature>
<feature type="transmembrane region" description="Helical" evidence="1">
    <location>
        <begin position="321"/>
        <end position="341"/>
    </location>
</feature>
<feature type="transmembrane region" description="Helical" evidence="1">
    <location>
        <begin position="359"/>
        <end position="379"/>
    </location>
</feature>
<feature type="transmembrane region" description="Helical" evidence="1">
    <location>
        <begin position="402"/>
        <end position="422"/>
    </location>
</feature>
<feature type="transmembrane region" description="Helical" evidence="1">
    <location>
        <begin position="427"/>
        <end position="447"/>
    </location>
</feature>
<comment type="function">
    <text>May be responsible for the uptake of short-chain fatty acids.</text>
</comment>
<comment type="subcellular location">
    <subcellularLocation>
        <location evidence="2">Cell inner membrane</location>
        <topology evidence="2">Multi-pass membrane protein</topology>
    </subcellularLocation>
</comment>